<protein>
    <recommendedName>
        <fullName>Oxysterol-binding protein-related protein 2</fullName>
        <shortName>ORP-2</shortName>
        <shortName>OSBP-related protein 2</shortName>
    </recommendedName>
</protein>
<proteinExistence type="evidence at protein level"/>
<organism>
    <name type="scientific">Mus musculus</name>
    <name type="common">Mouse</name>
    <dbReference type="NCBI Taxonomy" id="10090"/>
    <lineage>
        <taxon>Eukaryota</taxon>
        <taxon>Metazoa</taxon>
        <taxon>Chordata</taxon>
        <taxon>Craniata</taxon>
        <taxon>Vertebrata</taxon>
        <taxon>Euteleostomi</taxon>
        <taxon>Mammalia</taxon>
        <taxon>Eutheria</taxon>
        <taxon>Euarchontoglires</taxon>
        <taxon>Glires</taxon>
        <taxon>Rodentia</taxon>
        <taxon>Myomorpha</taxon>
        <taxon>Muroidea</taxon>
        <taxon>Muridae</taxon>
        <taxon>Murinae</taxon>
        <taxon>Mus</taxon>
        <taxon>Mus</taxon>
    </lineage>
</organism>
<keyword id="KW-1003">Cell membrane</keyword>
<keyword id="KW-0963">Cytoplasm</keyword>
<keyword id="KW-0551">Lipid droplet</keyword>
<keyword id="KW-0445">Lipid transport</keyword>
<keyword id="KW-0446">Lipid-binding</keyword>
<keyword id="KW-0472">Membrane</keyword>
<keyword id="KW-0597">Phosphoprotein</keyword>
<keyword id="KW-1185">Reference proteome</keyword>
<keyword id="KW-0813">Transport</keyword>
<feature type="chain" id="PRO_0000100370" description="Oxysterol-binding protein-related protein 2">
    <location>
        <begin position="1"/>
        <end position="484"/>
    </location>
</feature>
<feature type="region of interest" description="Disordered" evidence="2">
    <location>
        <begin position="35"/>
        <end position="61"/>
    </location>
</feature>
<feature type="region of interest" description="Disordered" evidence="2">
    <location>
        <begin position="319"/>
        <end position="348"/>
    </location>
</feature>
<feature type="region of interest" description="Disordered" evidence="2">
    <location>
        <begin position="423"/>
        <end position="454"/>
    </location>
</feature>
<feature type="compositionally biased region" description="Basic and acidic residues" evidence="2">
    <location>
        <begin position="319"/>
        <end position="340"/>
    </location>
</feature>
<feature type="compositionally biased region" description="Basic and acidic residues" evidence="2">
    <location>
        <begin position="424"/>
        <end position="450"/>
    </location>
</feature>
<feature type="binding site" evidence="1">
    <location>
        <position position="90"/>
    </location>
    <ligand>
        <name>a 1,2-diacyl-sn-glycero-3-phospho-(1D-myo-inositol-4,5-bisphosphate)</name>
        <dbReference type="ChEBI" id="CHEBI:58456"/>
    </ligand>
</feature>
<feature type="binding site" evidence="1">
    <location>
        <begin position="178"/>
        <end position="179"/>
    </location>
    <ligand>
        <name>a 1,2-diacyl-sn-glycero-3-phospho-(1D-myo-inositol-4,5-bisphosphate)</name>
        <dbReference type="ChEBI" id="CHEBI:58456"/>
    </ligand>
</feature>
<feature type="binding site" evidence="1">
    <location>
        <begin position="431"/>
        <end position="435"/>
    </location>
    <ligand>
        <name>a 1,2-diacyl-sn-glycero-3-phospho-(1D-myo-inositol-4,5-bisphosphate)</name>
        <dbReference type="ChEBI" id="CHEBI:58456"/>
    </ligand>
</feature>
<feature type="modified residue" description="Phosphoserine" evidence="1">
    <location>
        <position position="19"/>
    </location>
</feature>
<feature type="modified residue" description="Phosphoserine" evidence="1">
    <location>
        <position position="20"/>
    </location>
</feature>
<feature type="sequence conflict" description="In Ref. 2; AAH26804." evidence="4" ref="2">
    <original>I</original>
    <variation>T</variation>
    <location>
        <position position="21"/>
    </location>
</feature>
<sequence>MNGEEEFFDAVTGFDSDNSSIGEFSEANKISGMIDLDTSKSTRSGKNGEKPQQENGIQKHRTALPAPMFTRSDFSVWSILKKCIGLELSKITMPIAFNEPLSFLQRITEYMEHVYLIHKASSQSQPLERMQSVAAFAVSAVASQWERTGKPFNPLLGETYELIREDLGFRFISEQVSHHPPISAFYSEGLNQDFRFHGSIYPKLKFWGKSVEAEPRGTITLELLKHNEAYTWTNPTCCVHNVILGQLWIEQYGIVEIVNHRTGDKCILHFKPCGLFGKELHRVEGYIQDKNRKKLFIMYGKWTECLWGIDPASYESFKKQEKRGDQARKAKMDDGPEKANSDVPGDVADDVPVAQETVQVIPGSKLLWRINSRPPNSAQMYNFTSFTVSLNELESGMEKTLPPTDCRLRPDIRGMENGNMDLASQEKERLEEKQREARKERAKEDAEWRTRWFSPGNNPYTGAPDWLYAGHYFERNFSDCPDIY</sequence>
<reference key="1">
    <citation type="journal article" date="2005" name="Science">
        <title>The transcriptional landscape of the mammalian genome.</title>
        <authorList>
            <person name="Carninci P."/>
            <person name="Kasukawa T."/>
            <person name="Katayama S."/>
            <person name="Gough J."/>
            <person name="Frith M.C."/>
            <person name="Maeda N."/>
            <person name="Oyama R."/>
            <person name="Ravasi T."/>
            <person name="Lenhard B."/>
            <person name="Wells C."/>
            <person name="Kodzius R."/>
            <person name="Shimokawa K."/>
            <person name="Bajic V.B."/>
            <person name="Brenner S.E."/>
            <person name="Batalov S."/>
            <person name="Forrest A.R."/>
            <person name="Zavolan M."/>
            <person name="Davis M.J."/>
            <person name="Wilming L.G."/>
            <person name="Aidinis V."/>
            <person name="Allen J.E."/>
            <person name="Ambesi-Impiombato A."/>
            <person name="Apweiler R."/>
            <person name="Aturaliya R.N."/>
            <person name="Bailey T.L."/>
            <person name="Bansal M."/>
            <person name="Baxter L."/>
            <person name="Beisel K.W."/>
            <person name="Bersano T."/>
            <person name="Bono H."/>
            <person name="Chalk A.M."/>
            <person name="Chiu K.P."/>
            <person name="Choudhary V."/>
            <person name="Christoffels A."/>
            <person name="Clutterbuck D.R."/>
            <person name="Crowe M.L."/>
            <person name="Dalla E."/>
            <person name="Dalrymple B.P."/>
            <person name="de Bono B."/>
            <person name="Della Gatta G."/>
            <person name="di Bernardo D."/>
            <person name="Down T."/>
            <person name="Engstrom P."/>
            <person name="Fagiolini M."/>
            <person name="Faulkner G."/>
            <person name="Fletcher C.F."/>
            <person name="Fukushima T."/>
            <person name="Furuno M."/>
            <person name="Futaki S."/>
            <person name="Gariboldi M."/>
            <person name="Georgii-Hemming P."/>
            <person name="Gingeras T.R."/>
            <person name="Gojobori T."/>
            <person name="Green R.E."/>
            <person name="Gustincich S."/>
            <person name="Harbers M."/>
            <person name="Hayashi Y."/>
            <person name="Hensch T.K."/>
            <person name="Hirokawa N."/>
            <person name="Hill D."/>
            <person name="Huminiecki L."/>
            <person name="Iacono M."/>
            <person name="Ikeo K."/>
            <person name="Iwama A."/>
            <person name="Ishikawa T."/>
            <person name="Jakt M."/>
            <person name="Kanapin A."/>
            <person name="Katoh M."/>
            <person name="Kawasawa Y."/>
            <person name="Kelso J."/>
            <person name="Kitamura H."/>
            <person name="Kitano H."/>
            <person name="Kollias G."/>
            <person name="Krishnan S.P."/>
            <person name="Kruger A."/>
            <person name="Kummerfeld S.K."/>
            <person name="Kurochkin I.V."/>
            <person name="Lareau L.F."/>
            <person name="Lazarevic D."/>
            <person name="Lipovich L."/>
            <person name="Liu J."/>
            <person name="Liuni S."/>
            <person name="McWilliam S."/>
            <person name="Madan Babu M."/>
            <person name="Madera M."/>
            <person name="Marchionni L."/>
            <person name="Matsuda H."/>
            <person name="Matsuzawa S."/>
            <person name="Miki H."/>
            <person name="Mignone F."/>
            <person name="Miyake S."/>
            <person name="Morris K."/>
            <person name="Mottagui-Tabar S."/>
            <person name="Mulder N."/>
            <person name="Nakano N."/>
            <person name="Nakauchi H."/>
            <person name="Ng P."/>
            <person name="Nilsson R."/>
            <person name="Nishiguchi S."/>
            <person name="Nishikawa S."/>
            <person name="Nori F."/>
            <person name="Ohara O."/>
            <person name="Okazaki Y."/>
            <person name="Orlando V."/>
            <person name="Pang K.C."/>
            <person name="Pavan W.J."/>
            <person name="Pavesi G."/>
            <person name="Pesole G."/>
            <person name="Petrovsky N."/>
            <person name="Piazza S."/>
            <person name="Reed J."/>
            <person name="Reid J.F."/>
            <person name="Ring B.Z."/>
            <person name="Ringwald M."/>
            <person name="Rost B."/>
            <person name="Ruan Y."/>
            <person name="Salzberg S.L."/>
            <person name="Sandelin A."/>
            <person name="Schneider C."/>
            <person name="Schoenbach C."/>
            <person name="Sekiguchi K."/>
            <person name="Semple C.A."/>
            <person name="Seno S."/>
            <person name="Sessa L."/>
            <person name="Sheng Y."/>
            <person name="Shibata Y."/>
            <person name="Shimada H."/>
            <person name="Shimada K."/>
            <person name="Silva D."/>
            <person name="Sinclair B."/>
            <person name="Sperling S."/>
            <person name="Stupka E."/>
            <person name="Sugiura K."/>
            <person name="Sultana R."/>
            <person name="Takenaka Y."/>
            <person name="Taki K."/>
            <person name="Tammoja K."/>
            <person name="Tan S.L."/>
            <person name="Tang S."/>
            <person name="Taylor M.S."/>
            <person name="Tegner J."/>
            <person name="Teichmann S.A."/>
            <person name="Ueda H.R."/>
            <person name="van Nimwegen E."/>
            <person name="Verardo R."/>
            <person name="Wei C.L."/>
            <person name="Yagi K."/>
            <person name="Yamanishi H."/>
            <person name="Zabarovsky E."/>
            <person name="Zhu S."/>
            <person name="Zimmer A."/>
            <person name="Hide W."/>
            <person name="Bult C."/>
            <person name="Grimmond S.M."/>
            <person name="Teasdale R.D."/>
            <person name="Liu E.T."/>
            <person name="Brusic V."/>
            <person name="Quackenbush J."/>
            <person name="Wahlestedt C."/>
            <person name="Mattick J.S."/>
            <person name="Hume D.A."/>
            <person name="Kai C."/>
            <person name="Sasaki D."/>
            <person name="Tomaru Y."/>
            <person name="Fukuda S."/>
            <person name="Kanamori-Katayama M."/>
            <person name="Suzuki M."/>
            <person name="Aoki J."/>
            <person name="Arakawa T."/>
            <person name="Iida J."/>
            <person name="Imamura K."/>
            <person name="Itoh M."/>
            <person name="Kato T."/>
            <person name="Kawaji H."/>
            <person name="Kawagashira N."/>
            <person name="Kawashima T."/>
            <person name="Kojima M."/>
            <person name="Kondo S."/>
            <person name="Konno H."/>
            <person name="Nakano K."/>
            <person name="Ninomiya N."/>
            <person name="Nishio T."/>
            <person name="Okada M."/>
            <person name="Plessy C."/>
            <person name="Shibata K."/>
            <person name="Shiraki T."/>
            <person name="Suzuki S."/>
            <person name="Tagami M."/>
            <person name="Waki K."/>
            <person name="Watahiki A."/>
            <person name="Okamura-Oho Y."/>
            <person name="Suzuki H."/>
            <person name="Kawai J."/>
            <person name="Hayashizaki Y."/>
        </authorList>
    </citation>
    <scope>NUCLEOTIDE SEQUENCE [LARGE SCALE MRNA]</scope>
    <source>
        <strain>C57BL/6J</strain>
        <strain>NOD</strain>
        <tissue>Head</tissue>
    </source>
</reference>
<reference key="2">
    <citation type="journal article" date="2004" name="Genome Res.">
        <title>The status, quality, and expansion of the NIH full-length cDNA project: the Mammalian Gene Collection (MGC).</title>
        <authorList>
            <consortium name="The MGC Project Team"/>
        </authorList>
    </citation>
    <scope>NUCLEOTIDE SEQUENCE [LARGE SCALE MRNA]</scope>
    <source>
        <tissue>Liver</tissue>
    </source>
</reference>
<reference key="3">
    <citation type="journal article" date="2010" name="Cell">
        <title>A tissue-specific atlas of mouse protein phosphorylation and expression.</title>
        <authorList>
            <person name="Huttlin E.L."/>
            <person name="Jedrychowski M.P."/>
            <person name="Elias J.E."/>
            <person name="Goswami T."/>
            <person name="Rad R."/>
            <person name="Beausoleil S.A."/>
            <person name="Villen J."/>
            <person name="Haas W."/>
            <person name="Sowa M.E."/>
            <person name="Gygi S.P."/>
        </authorList>
    </citation>
    <scope>IDENTIFICATION BY MASS SPECTROMETRY [LARGE SCALE ANALYSIS]</scope>
    <source>
        <tissue>Brain</tissue>
        <tissue>Lung</tissue>
    </source>
</reference>
<reference key="4">
    <citation type="journal article" date="2015" name="Orphanet J. Rare Dis.">
        <title>OSBPL2 encodes a protein of inner and outer hair cell stereocilia and is mutated in autosomal dominant hearing loss (DFNA67).</title>
        <authorList>
            <person name="Thoenes M."/>
            <person name="Zimmermann U."/>
            <person name="Ebermann I."/>
            <person name="Ptok M."/>
            <person name="Lewis M.A."/>
            <person name="Thiele H."/>
            <person name="Morlot S."/>
            <person name="Hess M.M."/>
            <person name="Gal A."/>
            <person name="Eisenberger T."/>
            <person name="Bergmann C."/>
            <person name="Nuernberg G."/>
            <person name="Nuernberg P."/>
            <person name="Steel K.P."/>
            <person name="Knipper M."/>
            <person name="Bolz H.J."/>
        </authorList>
    </citation>
    <scope>TISSUE SPECIFICITY</scope>
</reference>
<comment type="function">
    <text evidence="1">Intracellular transport protein that binds sterols and phospholipids and mediates lipid transport between intracellular compartments. Increases plasma membrane cholesterol levels and decreases phosphatidylinositol-4,5-bisphosphate levels in the cell membrane. Binds phosphoinositides, such as phosphatidylinositol-4,5-bisphosphate. Exhibits strong binding to phosphatidic acid and weak binding to phosphatidylinositol 3-phosphate. Binds cholesterol, dehydroergosterol, 22(R)-hydroxycholesterol and 25-hydroxycholesterol (in vitro).</text>
</comment>
<comment type="subunit">
    <text evidence="1">Monomer. Homotetramer; phosphatidylinositol-4,5-bisphosphate binding promotes formation of stable tetramers. Interacts with DIAPH1.</text>
</comment>
<comment type="subcellular location">
    <subcellularLocation>
        <location evidence="1">Cytoplasm</location>
        <location evidence="1">Cytosol</location>
    </subcellularLocation>
    <subcellularLocation>
        <location evidence="1">Lipid droplet</location>
    </subcellularLocation>
    <subcellularLocation>
        <location evidence="1">Cell membrane</location>
        <topology evidence="1">Peripheral membrane protein</topology>
        <orientation evidence="1">Cytoplasmic side</orientation>
    </subcellularLocation>
    <text evidence="1">Detected on the surface of cytosolic lipid droplets. Recruited to the cell membrane by phosphatidylinositol-phosphate binding.</text>
</comment>
<comment type="tissue specificity">
    <text evidence="3">Detected in cochlea, in inner and outer hair cells in the organ of Corti (at protein level).</text>
</comment>
<comment type="similarity">
    <text evidence="4">Belongs to the OSBP family.</text>
</comment>
<accession>Q8BX94</accession>
<accession>Q3TCK8</accession>
<accession>Q8R0H8</accession>
<gene>
    <name type="primary">Osbpl2</name>
</gene>
<dbReference type="EMBL" id="AK048537">
    <property type="protein sequence ID" value="BAC33367.1"/>
    <property type="molecule type" value="mRNA"/>
</dbReference>
<dbReference type="EMBL" id="AK170669">
    <property type="protein sequence ID" value="BAE41948.1"/>
    <property type="molecule type" value="mRNA"/>
</dbReference>
<dbReference type="EMBL" id="BC026804">
    <property type="protein sequence ID" value="AAH26804.1"/>
    <property type="molecule type" value="mRNA"/>
</dbReference>
<dbReference type="CCDS" id="CCDS17170.1"/>
<dbReference type="RefSeq" id="NP_653083.2">
    <property type="nucleotide sequence ID" value="NM_144500.4"/>
</dbReference>
<dbReference type="RefSeq" id="XP_017173482.1">
    <property type="nucleotide sequence ID" value="XM_017317993.2"/>
</dbReference>
<dbReference type="RefSeq" id="XP_030106654.1">
    <property type="nucleotide sequence ID" value="XM_030250794.2"/>
</dbReference>
<dbReference type="SMR" id="Q8BX94"/>
<dbReference type="FunCoup" id="Q8BX94">
    <property type="interactions" value="1770"/>
</dbReference>
<dbReference type="STRING" id="10090.ENSMUSP00000046538"/>
<dbReference type="PhosphoSitePlus" id="Q8BX94"/>
<dbReference type="PaxDb" id="10090-ENSMUSP00000046538"/>
<dbReference type="ProteomicsDB" id="294112"/>
<dbReference type="Pumba" id="Q8BX94"/>
<dbReference type="Antibodypedia" id="29467">
    <property type="antibodies" value="187 antibodies from 31 providers"/>
</dbReference>
<dbReference type="DNASU" id="228983"/>
<dbReference type="Ensembl" id="ENSMUST00000040668.9">
    <property type="protein sequence ID" value="ENSMUSP00000046538.9"/>
    <property type="gene ID" value="ENSMUSG00000039050.9"/>
</dbReference>
<dbReference type="GeneID" id="228983"/>
<dbReference type="KEGG" id="mmu:228983"/>
<dbReference type="UCSC" id="uc008oik.1">
    <property type="organism name" value="mouse"/>
</dbReference>
<dbReference type="AGR" id="MGI:2442832"/>
<dbReference type="CTD" id="9885"/>
<dbReference type="MGI" id="MGI:2442832">
    <property type="gene designation" value="Osbpl2"/>
</dbReference>
<dbReference type="VEuPathDB" id="HostDB:ENSMUSG00000039050"/>
<dbReference type="eggNOG" id="KOG2209">
    <property type="taxonomic scope" value="Eukaryota"/>
</dbReference>
<dbReference type="GeneTree" id="ENSGT00940000158762"/>
<dbReference type="HOGENOM" id="CLU_007105_6_2_1"/>
<dbReference type="InParanoid" id="Q8BX94"/>
<dbReference type="OMA" id="MSEPLQY"/>
<dbReference type="OrthoDB" id="416222at2759"/>
<dbReference type="PhylomeDB" id="Q8BX94"/>
<dbReference type="Reactome" id="R-MMU-192105">
    <property type="pathway name" value="Synthesis of bile acids and bile salts"/>
</dbReference>
<dbReference type="BioGRID-ORCS" id="228983">
    <property type="hits" value="3 hits in 78 CRISPR screens"/>
</dbReference>
<dbReference type="ChiTaRS" id="Osbpl2">
    <property type="organism name" value="mouse"/>
</dbReference>
<dbReference type="PRO" id="PR:Q8BX94"/>
<dbReference type="Proteomes" id="UP000000589">
    <property type="component" value="Chromosome 2"/>
</dbReference>
<dbReference type="RNAct" id="Q8BX94">
    <property type="molecule type" value="protein"/>
</dbReference>
<dbReference type="Bgee" id="ENSMUSG00000039050">
    <property type="expression patterns" value="Expressed in urinary bladder urothelium and 247 other cell types or tissues"/>
</dbReference>
<dbReference type="GO" id="GO:0009898">
    <property type="term" value="C:cytoplasmic side of plasma membrane"/>
    <property type="evidence" value="ECO:0000250"/>
    <property type="project" value="UniProtKB"/>
</dbReference>
<dbReference type="GO" id="GO:0005829">
    <property type="term" value="C:cytosol"/>
    <property type="evidence" value="ECO:0000250"/>
    <property type="project" value="UniProtKB"/>
</dbReference>
<dbReference type="GO" id="GO:0098978">
    <property type="term" value="C:glutamatergic synapse"/>
    <property type="evidence" value="ECO:0000314"/>
    <property type="project" value="SynGO"/>
</dbReference>
<dbReference type="GO" id="GO:0005811">
    <property type="term" value="C:lipid droplet"/>
    <property type="evidence" value="ECO:0007669"/>
    <property type="project" value="UniProtKB-SubCell"/>
</dbReference>
<dbReference type="GO" id="GO:0098831">
    <property type="term" value="C:presynaptic active zone cytoplasmic component"/>
    <property type="evidence" value="ECO:0000314"/>
    <property type="project" value="SynGO"/>
</dbReference>
<dbReference type="GO" id="GO:0015485">
    <property type="term" value="F:cholesterol binding"/>
    <property type="evidence" value="ECO:0007669"/>
    <property type="project" value="Ensembl"/>
</dbReference>
<dbReference type="GO" id="GO:0120020">
    <property type="term" value="F:cholesterol transfer activity"/>
    <property type="evidence" value="ECO:0000250"/>
    <property type="project" value="UniProtKB"/>
</dbReference>
<dbReference type="GO" id="GO:0008526">
    <property type="term" value="F:phosphatidylinositol transfer activity"/>
    <property type="evidence" value="ECO:0000250"/>
    <property type="project" value="UniProtKB"/>
</dbReference>
<dbReference type="GO" id="GO:0005546">
    <property type="term" value="F:phosphatidylinositol-4,5-bisphosphate binding"/>
    <property type="evidence" value="ECO:0000250"/>
    <property type="project" value="UniProtKB"/>
</dbReference>
<dbReference type="GO" id="GO:0032367">
    <property type="term" value="P:intracellular cholesterol transport"/>
    <property type="evidence" value="ECO:0000250"/>
    <property type="project" value="UniProtKB"/>
</dbReference>
<dbReference type="GO" id="GO:0007009">
    <property type="term" value="P:plasma membrane organization"/>
    <property type="evidence" value="ECO:0007669"/>
    <property type="project" value="Ensembl"/>
</dbReference>
<dbReference type="GO" id="GO:0051289">
    <property type="term" value="P:protein homotetramerization"/>
    <property type="evidence" value="ECO:0000250"/>
    <property type="project" value="UniProtKB"/>
</dbReference>
<dbReference type="GO" id="GO:0099509">
    <property type="term" value="P:regulation of presynaptic cytosolic calcium ion concentration"/>
    <property type="evidence" value="ECO:0000314"/>
    <property type="project" value="SynGO"/>
</dbReference>
<dbReference type="GO" id="GO:0010807">
    <property type="term" value="P:regulation of synaptic vesicle priming"/>
    <property type="evidence" value="ECO:0007669"/>
    <property type="project" value="Ensembl"/>
</dbReference>
<dbReference type="FunFam" id="2.40.160.120:FF:000005">
    <property type="entry name" value="Oxysterol-binding protein"/>
    <property type="match status" value="1"/>
</dbReference>
<dbReference type="FunFam" id="3.30.70.3490:FF:000003">
    <property type="entry name" value="Oxysterol-binding protein"/>
    <property type="match status" value="1"/>
</dbReference>
<dbReference type="Gene3D" id="2.40.160.120">
    <property type="match status" value="1"/>
</dbReference>
<dbReference type="Gene3D" id="3.30.70.3490">
    <property type="match status" value="1"/>
</dbReference>
<dbReference type="InterPro" id="IPR037239">
    <property type="entry name" value="OSBP_sf"/>
</dbReference>
<dbReference type="InterPro" id="IPR000648">
    <property type="entry name" value="Oxysterol-bd"/>
</dbReference>
<dbReference type="InterPro" id="IPR018494">
    <property type="entry name" value="Oxysterol-bd_CS"/>
</dbReference>
<dbReference type="PANTHER" id="PTHR10972">
    <property type="entry name" value="OXYSTEROL-BINDING PROTEIN-RELATED"/>
    <property type="match status" value="1"/>
</dbReference>
<dbReference type="PANTHER" id="PTHR10972:SF153">
    <property type="entry name" value="OXYSTEROL-BINDING PROTEIN-RELATED PROTEIN 2"/>
    <property type="match status" value="1"/>
</dbReference>
<dbReference type="Pfam" id="PF01237">
    <property type="entry name" value="Oxysterol_BP"/>
    <property type="match status" value="1"/>
</dbReference>
<dbReference type="SUPFAM" id="SSF144000">
    <property type="entry name" value="Oxysterol-binding protein-like"/>
    <property type="match status" value="1"/>
</dbReference>
<dbReference type="PROSITE" id="PS01013">
    <property type="entry name" value="OSBP"/>
    <property type="match status" value="1"/>
</dbReference>
<name>OSBL2_MOUSE</name>
<evidence type="ECO:0000250" key="1">
    <source>
        <dbReference type="UniProtKB" id="Q9H1P3"/>
    </source>
</evidence>
<evidence type="ECO:0000256" key="2">
    <source>
        <dbReference type="SAM" id="MobiDB-lite"/>
    </source>
</evidence>
<evidence type="ECO:0000269" key="3">
    <source>
    </source>
</evidence>
<evidence type="ECO:0000305" key="4"/>